<sequence length="407" mass="44522">MSIENKNTGVKKVVLAYSGGLDTSAIIPWLKETYDNCEIIAFCADVGQGEEELVGLTEKALASGASECHIVDLKEEFVKDYIYPTMATGAIYEGTYLLGTSMARPIIAKAQVEVARKVGADALCHGCTGKGNDQVRFEGCFAALAPDLKVIAPWREWTMQSREDLLAYLAERNIKTSASATKIYSRDANAFHISHEGGELEDPWNEPSKGVWTLTADPEDAPNQAEYVSLEVEHGRVTKVNGEALTPYAALMKLNAIAAPHGVGRIDITENRLVGMKSRGCYETPGGTVMFAALRAIEELVLDKTSRTWREQVGAQMAHLVYDGRWFTPLCKSLLAASESLAESVNGEVVVKLYKGHAIAVKKRSPNSLYSEAFATFGEDQVYDQKHAEGFIRLYSLASRIRALNAK</sequence>
<comment type="catalytic activity">
    <reaction evidence="1">
        <text>L-citrulline + L-aspartate + ATP = 2-(N(omega)-L-arginino)succinate + AMP + diphosphate + H(+)</text>
        <dbReference type="Rhea" id="RHEA:10932"/>
        <dbReference type="ChEBI" id="CHEBI:15378"/>
        <dbReference type="ChEBI" id="CHEBI:29991"/>
        <dbReference type="ChEBI" id="CHEBI:30616"/>
        <dbReference type="ChEBI" id="CHEBI:33019"/>
        <dbReference type="ChEBI" id="CHEBI:57472"/>
        <dbReference type="ChEBI" id="CHEBI:57743"/>
        <dbReference type="ChEBI" id="CHEBI:456215"/>
        <dbReference type="EC" id="6.3.4.5"/>
    </reaction>
</comment>
<comment type="pathway">
    <text evidence="1">Amino-acid biosynthesis; L-arginine biosynthesis; L-arginine from L-ornithine and carbamoyl phosphate: step 2/3.</text>
</comment>
<comment type="subunit">
    <text evidence="1">Homotetramer.</text>
</comment>
<comment type="subcellular location">
    <subcellularLocation>
        <location evidence="1">Cytoplasm</location>
    </subcellularLocation>
</comment>
<comment type="similarity">
    <text evidence="1">Belongs to the argininosuccinate synthase family. Type 1 subfamily.</text>
</comment>
<proteinExistence type="inferred from homology"/>
<keyword id="KW-0028">Amino-acid biosynthesis</keyword>
<keyword id="KW-0055">Arginine biosynthesis</keyword>
<keyword id="KW-0067">ATP-binding</keyword>
<keyword id="KW-0963">Cytoplasm</keyword>
<keyword id="KW-0436">Ligase</keyword>
<keyword id="KW-0547">Nucleotide-binding</keyword>
<protein>
    <recommendedName>
        <fullName evidence="1">Argininosuccinate synthase</fullName>
        <ecNumber evidence="1">6.3.4.5</ecNumber>
    </recommendedName>
    <alternativeName>
        <fullName evidence="1">Citrulline--aspartate ligase</fullName>
    </alternativeName>
</protein>
<evidence type="ECO:0000255" key="1">
    <source>
        <dbReference type="HAMAP-Rule" id="MF_00005"/>
    </source>
</evidence>
<reference key="1">
    <citation type="submission" date="2006-09" db="EMBL/GenBank/DDBJ databases">
        <title>Complete sequence of chromosome 1 of Shewanella sp. ANA-3.</title>
        <authorList>
            <person name="Copeland A."/>
            <person name="Lucas S."/>
            <person name="Lapidus A."/>
            <person name="Barry K."/>
            <person name="Detter J.C."/>
            <person name="Glavina del Rio T."/>
            <person name="Hammon N."/>
            <person name="Israni S."/>
            <person name="Dalin E."/>
            <person name="Tice H."/>
            <person name="Pitluck S."/>
            <person name="Chertkov O."/>
            <person name="Brettin T."/>
            <person name="Bruce D."/>
            <person name="Han C."/>
            <person name="Tapia R."/>
            <person name="Gilna P."/>
            <person name="Schmutz J."/>
            <person name="Larimer F."/>
            <person name="Land M."/>
            <person name="Hauser L."/>
            <person name="Kyrpides N."/>
            <person name="Kim E."/>
            <person name="Newman D."/>
            <person name="Salticov C."/>
            <person name="Konstantinidis K."/>
            <person name="Klappenback J."/>
            <person name="Tiedje J."/>
            <person name="Richardson P."/>
        </authorList>
    </citation>
    <scope>NUCLEOTIDE SEQUENCE [LARGE SCALE GENOMIC DNA]</scope>
    <source>
        <strain>ANA-3</strain>
    </source>
</reference>
<accession>A0L251</accession>
<gene>
    <name evidence="1" type="primary">argG</name>
    <name type="ordered locus">Shewana3_3902</name>
</gene>
<name>ASSY_SHESA</name>
<organism>
    <name type="scientific">Shewanella sp. (strain ANA-3)</name>
    <dbReference type="NCBI Taxonomy" id="94122"/>
    <lineage>
        <taxon>Bacteria</taxon>
        <taxon>Pseudomonadati</taxon>
        <taxon>Pseudomonadota</taxon>
        <taxon>Gammaproteobacteria</taxon>
        <taxon>Alteromonadales</taxon>
        <taxon>Shewanellaceae</taxon>
        <taxon>Shewanella</taxon>
    </lineage>
</organism>
<dbReference type="EC" id="6.3.4.5" evidence="1"/>
<dbReference type="EMBL" id="CP000469">
    <property type="protein sequence ID" value="ABK50120.1"/>
    <property type="molecule type" value="Genomic_DNA"/>
</dbReference>
<dbReference type="RefSeq" id="WP_011624428.1">
    <property type="nucleotide sequence ID" value="NC_008577.1"/>
</dbReference>
<dbReference type="SMR" id="A0L251"/>
<dbReference type="STRING" id="94122.Shewana3_3902"/>
<dbReference type="KEGG" id="shn:Shewana3_3902"/>
<dbReference type="eggNOG" id="COG0137">
    <property type="taxonomic scope" value="Bacteria"/>
</dbReference>
<dbReference type="HOGENOM" id="CLU_032784_4_2_6"/>
<dbReference type="OrthoDB" id="9801641at2"/>
<dbReference type="UniPathway" id="UPA00068">
    <property type="reaction ID" value="UER00113"/>
</dbReference>
<dbReference type="Proteomes" id="UP000002589">
    <property type="component" value="Chromosome"/>
</dbReference>
<dbReference type="GO" id="GO:0005737">
    <property type="term" value="C:cytoplasm"/>
    <property type="evidence" value="ECO:0007669"/>
    <property type="project" value="UniProtKB-SubCell"/>
</dbReference>
<dbReference type="GO" id="GO:0004055">
    <property type="term" value="F:argininosuccinate synthase activity"/>
    <property type="evidence" value="ECO:0007669"/>
    <property type="project" value="UniProtKB-UniRule"/>
</dbReference>
<dbReference type="GO" id="GO:0005524">
    <property type="term" value="F:ATP binding"/>
    <property type="evidence" value="ECO:0007669"/>
    <property type="project" value="UniProtKB-UniRule"/>
</dbReference>
<dbReference type="GO" id="GO:0000053">
    <property type="term" value="P:argininosuccinate metabolic process"/>
    <property type="evidence" value="ECO:0007669"/>
    <property type="project" value="TreeGrafter"/>
</dbReference>
<dbReference type="GO" id="GO:0006526">
    <property type="term" value="P:L-arginine biosynthetic process"/>
    <property type="evidence" value="ECO:0007669"/>
    <property type="project" value="UniProtKB-UniRule"/>
</dbReference>
<dbReference type="GO" id="GO:0000050">
    <property type="term" value="P:urea cycle"/>
    <property type="evidence" value="ECO:0007669"/>
    <property type="project" value="TreeGrafter"/>
</dbReference>
<dbReference type="CDD" id="cd01999">
    <property type="entry name" value="ASS"/>
    <property type="match status" value="1"/>
</dbReference>
<dbReference type="FunFam" id="1.20.5.470:FF:000005">
    <property type="entry name" value="Argininosuccinate synthase"/>
    <property type="match status" value="1"/>
</dbReference>
<dbReference type="FunFam" id="3.40.50.620:FF:000019">
    <property type="entry name" value="Argininosuccinate synthase"/>
    <property type="match status" value="1"/>
</dbReference>
<dbReference type="FunFam" id="3.90.1260.10:FF:000007">
    <property type="entry name" value="Argininosuccinate synthase"/>
    <property type="match status" value="1"/>
</dbReference>
<dbReference type="Gene3D" id="3.90.1260.10">
    <property type="entry name" value="Argininosuccinate synthetase, chain A, domain 2"/>
    <property type="match status" value="1"/>
</dbReference>
<dbReference type="Gene3D" id="3.40.50.620">
    <property type="entry name" value="HUPs"/>
    <property type="match status" value="1"/>
</dbReference>
<dbReference type="Gene3D" id="1.20.5.470">
    <property type="entry name" value="Single helix bin"/>
    <property type="match status" value="1"/>
</dbReference>
<dbReference type="HAMAP" id="MF_00005">
    <property type="entry name" value="Arg_succ_synth_type1"/>
    <property type="match status" value="1"/>
</dbReference>
<dbReference type="InterPro" id="IPR048268">
    <property type="entry name" value="Arginosuc_syn_C"/>
</dbReference>
<dbReference type="InterPro" id="IPR048267">
    <property type="entry name" value="Arginosuc_syn_N"/>
</dbReference>
<dbReference type="InterPro" id="IPR001518">
    <property type="entry name" value="Arginosuc_synth"/>
</dbReference>
<dbReference type="InterPro" id="IPR018223">
    <property type="entry name" value="Arginosuc_synth_CS"/>
</dbReference>
<dbReference type="InterPro" id="IPR023434">
    <property type="entry name" value="Arginosuc_synth_type_1_subfam"/>
</dbReference>
<dbReference type="InterPro" id="IPR024074">
    <property type="entry name" value="AS_cat/multimer_dom_body"/>
</dbReference>
<dbReference type="InterPro" id="IPR014729">
    <property type="entry name" value="Rossmann-like_a/b/a_fold"/>
</dbReference>
<dbReference type="NCBIfam" id="TIGR00032">
    <property type="entry name" value="argG"/>
    <property type="match status" value="1"/>
</dbReference>
<dbReference type="NCBIfam" id="NF001770">
    <property type="entry name" value="PRK00509.1"/>
    <property type="match status" value="1"/>
</dbReference>
<dbReference type="PANTHER" id="PTHR11587">
    <property type="entry name" value="ARGININOSUCCINATE SYNTHASE"/>
    <property type="match status" value="1"/>
</dbReference>
<dbReference type="PANTHER" id="PTHR11587:SF2">
    <property type="entry name" value="ARGININOSUCCINATE SYNTHASE"/>
    <property type="match status" value="1"/>
</dbReference>
<dbReference type="Pfam" id="PF20979">
    <property type="entry name" value="Arginosuc_syn_C"/>
    <property type="match status" value="1"/>
</dbReference>
<dbReference type="Pfam" id="PF00764">
    <property type="entry name" value="Arginosuc_synth"/>
    <property type="match status" value="1"/>
</dbReference>
<dbReference type="SUPFAM" id="SSF52402">
    <property type="entry name" value="Adenine nucleotide alpha hydrolases-like"/>
    <property type="match status" value="1"/>
</dbReference>
<dbReference type="SUPFAM" id="SSF69864">
    <property type="entry name" value="Argininosuccinate synthetase, C-terminal domain"/>
    <property type="match status" value="1"/>
</dbReference>
<dbReference type="PROSITE" id="PS00564">
    <property type="entry name" value="ARGININOSUCCIN_SYN_1"/>
    <property type="match status" value="1"/>
</dbReference>
<dbReference type="PROSITE" id="PS00565">
    <property type="entry name" value="ARGININOSUCCIN_SYN_2"/>
    <property type="match status" value="1"/>
</dbReference>
<feature type="chain" id="PRO_1000000435" description="Argininosuccinate synthase">
    <location>
        <begin position="1"/>
        <end position="407"/>
    </location>
</feature>
<feature type="binding site" evidence="1">
    <location>
        <begin position="16"/>
        <end position="24"/>
    </location>
    <ligand>
        <name>ATP</name>
        <dbReference type="ChEBI" id="CHEBI:30616"/>
    </ligand>
</feature>
<feature type="binding site" evidence="1">
    <location>
        <position position="44"/>
    </location>
    <ligand>
        <name>ATP</name>
        <dbReference type="ChEBI" id="CHEBI:30616"/>
    </ligand>
</feature>
<feature type="binding site" evidence="1">
    <location>
        <position position="96"/>
    </location>
    <ligand>
        <name>L-citrulline</name>
        <dbReference type="ChEBI" id="CHEBI:57743"/>
    </ligand>
</feature>
<feature type="binding site" evidence="1">
    <location>
        <position position="101"/>
    </location>
    <ligand>
        <name>L-citrulline</name>
        <dbReference type="ChEBI" id="CHEBI:57743"/>
    </ligand>
</feature>
<feature type="binding site" evidence="1">
    <location>
        <position position="126"/>
    </location>
    <ligand>
        <name>ATP</name>
        <dbReference type="ChEBI" id="CHEBI:30616"/>
    </ligand>
</feature>
<feature type="binding site" evidence="1">
    <location>
        <position position="128"/>
    </location>
    <ligand>
        <name>L-aspartate</name>
        <dbReference type="ChEBI" id="CHEBI:29991"/>
    </ligand>
</feature>
<feature type="binding site" evidence="1">
    <location>
        <position position="132"/>
    </location>
    <ligand>
        <name>L-aspartate</name>
        <dbReference type="ChEBI" id="CHEBI:29991"/>
    </ligand>
</feature>
<feature type="binding site" evidence="1">
    <location>
        <position position="132"/>
    </location>
    <ligand>
        <name>L-citrulline</name>
        <dbReference type="ChEBI" id="CHEBI:57743"/>
    </ligand>
</feature>
<feature type="binding site" evidence="1">
    <location>
        <position position="133"/>
    </location>
    <ligand>
        <name>L-aspartate</name>
        <dbReference type="ChEBI" id="CHEBI:29991"/>
    </ligand>
</feature>
<feature type="binding site" evidence="1">
    <location>
        <position position="136"/>
    </location>
    <ligand>
        <name>L-citrulline</name>
        <dbReference type="ChEBI" id="CHEBI:57743"/>
    </ligand>
</feature>
<feature type="binding site" evidence="1">
    <location>
        <position position="185"/>
    </location>
    <ligand>
        <name>L-citrulline</name>
        <dbReference type="ChEBI" id="CHEBI:57743"/>
    </ligand>
</feature>
<feature type="binding site" evidence="1">
    <location>
        <position position="194"/>
    </location>
    <ligand>
        <name>L-citrulline</name>
        <dbReference type="ChEBI" id="CHEBI:57743"/>
    </ligand>
</feature>
<feature type="binding site" evidence="1">
    <location>
        <position position="270"/>
    </location>
    <ligand>
        <name>L-citrulline</name>
        <dbReference type="ChEBI" id="CHEBI:57743"/>
    </ligand>
</feature>
<feature type="binding site" evidence="1">
    <location>
        <position position="282"/>
    </location>
    <ligand>
        <name>L-citrulline</name>
        <dbReference type="ChEBI" id="CHEBI:57743"/>
    </ligand>
</feature>